<feature type="chain" id="PRO_1000094252" description="2-C-methyl-D-erythritol 2,4-cyclodiphosphate synthase">
    <location>
        <begin position="1"/>
        <end position="157"/>
    </location>
</feature>
<feature type="binding site" evidence="1">
    <location>
        <begin position="8"/>
        <end position="10"/>
    </location>
    <ligand>
        <name>4-CDP-2-C-methyl-D-erythritol 2-phosphate</name>
        <dbReference type="ChEBI" id="CHEBI:57919"/>
    </ligand>
</feature>
<feature type="binding site" evidence="1">
    <location>
        <position position="8"/>
    </location>
    <ligand>
        <name>a divalent metal cation</name>
        <dbReference type="ChEBI" id="CHEBI:60240"/>
    </ligand>
</feature>
<feature type="binding site" evidence="1">
    <location>
        <position position="10"/>
    </location>
    <ligand>
        <name>a divalent metal cation</name>
        <dbReference type="ChEBI" id="CHEBI:60240"/>
    </ligand>
</feature>
<feature type="binding site" evidence="1">
    <location>
        <begin position="34"/>
        <end position="35"/>
    </location>
    <ligand>
        <name>4-CDP-2-C-methyl-D-erythritol 2-phosphate</name>
        <dbReference type="ChEBI" id="CHEBI:57919"/>
    </ligand>
</feature>
<feature type="binding site" evidence="1">
    <location>
        <position position="42"/>
    </location>
    <ligand>
        <name>a divalent metal cation</name>
        <dbReference type="ChEBI" id="CHEBI:60240"/>
    </ligand>
</feature>
<feature type="binding site" evidence="1">
    <location>
        <begin position="56"/>
        <end position="58"/>
    </location>
    <ligand>
        <name>4-CDP-2-C-methyl-D-erythritol 2-phosphate</name>
        <dbReference type="ChEBI" id="CHEBI:57919"/>
    </ligand>
</feature>
<feature type="binding site" evidence="1">
    <location>
        <begin position="61"/>
        <end position="65"/>
    </location>
    <ligand>
        <name>4-CDP-2-C-methyl-D-erythritol 2-phosphate</name>
        <dbReference type="ChEBI" id="CHEBI:57919"/>
    </ligand>
</feature>
<feature type="binding site" evidence="1">
    <location>
        <begin position="132"/>
        <end position="135"/>
    </location>
    <ligand>
        <name>4-CDP-2-C-methyl-D-erythritol 2-phosphate</name>
        <dbReference type="ChEBI" id="CHEBI:57919"/>
    </ligand>
</feature>
<feature type="binding site" evidence="1">
    <location>
        <position position="139"/>
    </location>
    <ligand>
        <name>4-CDP-2-C-methyl-D-erythritol 2-phosphate</name>
        <dbReference type="ChEBI" id="CHEBI:57919"/>
    </ligand>
</feature>
<feature type="site" description="Transition state stabilizer" evidence="1">
    <location>
        <position position="34"/>
    </location>
</feature>
<feature type="site" description="Transition state stabilizer" evidence="1">
    <location>
        <position position="133"/>
    </location>
</feature>
<comment type="function">
    <text evidence="1">Involved in the biosynthesis of isopentenyl diphosphate (IPP) and dimethylallyl diphosphate (DMAPP), two major building blocks of isoprenoid compounds. Catalyzes the conversion of 4-diphosphocytidyl-2-C-methyl-D-erythritol 2-phosphate (CDP-ME2P) to 2-C-methyl-D-erythritol 2,4-cyclodiphosphate (ME-CPP) with a corresponding release of cytidine 5-monophosphate (CMP).</text>
</comment>
<comment type="catalytic activity">
    <reaction evidence="1">
        <text>4-CDP-2-C-methyl-D-erythritol 2-phosphate = 2-C-methyl-D-erythritol 2,4-cyclic diphosphate + CMP</text>
        <dbReference type="Rhea" id="RHEA:23864"/>
        <dbReference type="ChEBI" id="CHEBI:57919"/>
        <dbReference type="ChEBI" id="CHEBI:58483"/>
        <dbReference type="ChEBI" id="CHEBI:60377"/>
        <dbReference type="EC" id="4.6.1.12"/>
    </reaction>
</comment>
<comment type="cofactor">
    <cofactor evidence="1">
        <name>a divalent metal cation</name>
        <dbReference type="ChEBI" id="CHEBI:60240"/>
    </cofactor>
    <text evidence="1">Binds 1 divalent metal cation per subunit.</text>
</comment>
<comment type="pathway">
    <text evidence="1">Isoprenoid biosynthesis; isopentenyl diphosphate biosynthesis via DXP pathway; isopentenyl diphosphate from 1-deoxy-D-xylulose 5-phosphate: step 4/6.</text>
</comment>
<comment type="subunit">
    <text evidence="1">Homotrimer.</text>
</comment>
<comment type="similarity">
    <text evidence="1">Belongs to the IspF family.</text>
</comment>
<proteinExistence type="inferred from homology"/>
<evidence type="ECO:0000255" key="1">
    <source>
        <dbReference type="HAMAP-Rule" id="MF_00107"/>
    </source>
</evidence>
<reference key="1">
    <citation type="submission" date="2008-05" db="EMBL/GenBank/DDBJ databases">
        <title>Complete genome sequence of Clostridium botulinum E3 str. Alaska E43.</title>
        <authorList>
            <person name="Brinkac L.M."/>
            <person name="Brown J.L."/>
            <person name="Bruce D."/>
            <person name="Detter C."/>
            <person name="Munk C."/>
            <person name="Smith L.A."/>
            <person name="Smith T.J."/>
            <person name="Sutton G."/>
            <person name="Brettin T.S."/>
        </authorList>
    </citation>
    <scope>NUCLEOTIDE SEQUENCE [LARGE SCALE GENOMIC DNA]</scope>
    <source>
        <strain>Alaska E43 / Type E3</strain>
    </source>
</reference>
<gene>
    <name evidence="1" type="primary">ispF</name>
    <name type="ordered locus">CLH_0338</name>
</gene>
<protein>
    <recommendedName>
        <fullName evidence="1">2-C-methyl-D-erythritol 2,4-cyclodiphosphate synthase</fullName>
        <shortName evidence="1">MECDP-synthase</shortName>
        <shortName evidence="1">MECPP-synthase</shortName>
        <shortName evidence="1">MECPS</shortName>
        <ecNumber evidence="1">4.6.1.12</ecNumber>
    </recommendedName>
</protein>
<accession>B2UYW8</accession>
<sequence length="157" mass="17114">MRVGLGYDVHKLVENRKLILGGVEIPYEKGLLGHSDADVLLHAIMDSLLGACALGDIGRHFPDTDNKFKGISSIKLLEEVNKLIIKNGYIINNIDSVIIAQKPKLAPYIENMRVNISNALNIEIDKINIKATTEEGLGFTGSMLGISSQSICSVIKK</sequence>
<name>ISPF_CLOBA</name>
<organism>
    <name type="scientific">Clostridium botulinum (strain Alaska E43 / Type E3)</name>
    <dbReference type="NCBI Taxonomy" id="508767"/>
    <lineage>
        <taxon>Bacteria</taxon>
        <taxon>Bacillati</taxon>
        <taxon>Bacillota</taxon>
        <taxon>Clostridia</taxon>
        <taxon>Eubacteriales</taxon>
        <taxon>Clostridiaceae</taxon>
        <taxon>Clostridium</taxon>
    </lineage>
</organism>
<keyword id="KW-0414">Isoprene biosynthesis</keyword>
<keyword id="KW-0456">Lyase</keyword>
<keyword id="KW-0479">Metal-binding</keyword>
<dbReference type="EC" id="4.6.1.12" evidence="1"/>
<dbReference type="EMBL" id="CP001078">
    <property type="protein sequence ID" value="ACD52352.1"/>
    <property type="molecule type" value="Genomic_DNA"/>
</dbReference>
<dbReference type="RefSeq" id="WP_012450515.1">
    <property type="nucleotide sequence ID" value="NC_010723.1"/>
</dbReference>
<dbReference type="SMR" id="B2UYW8"/>
<dbReference type="KEGG" id="cbt:CLH_0338"/>
<dbReference type="HOGENOM" id="CLU_084630_2_0_9"/>
<dbReference type="UniPathway" id="UPA00056">
    <property type="reaction ID" value="UER00095"/>
</dbReference>
<dbReference type="GO" id="GO:0008685">
    <property type="term" value="F:2-C-methyl-D-erythritol 2,4-cyclodiphosphate synthase activity"/>
    <property type="evidence" value="ECO:0007669"/>
    <property type="project" value="UniProtKB-UniRule"/>
</dbReference>
<dbReference type="GO" id="GO:0046872">
    <property type="term" value="F:metal ion binding"/>
    <property type="evidence" value="ECO:0007669"/>
    <property type="project" value="UniProtKB-KW"/>
</dbReference>
<dbReference type="GO" id="GO:0019288">
    <property type="term" value="P:isopentenyl diphosphate biosynthetic process, methylerythritol 4-phosphate pathway"/>
    <property type="evidence" value="ECO:0007669"/>
    <property type="project" value="UniProtKB-UniRule"/>
</dbReference>
<dbReference type="GO" id="GO:0016114">
    <property type="term" value="P:terpenoid biosynthetic process"/>
    <property type="evidence" value="ECO:0007669"/>
    <property type="project" value="InterPro"/>
</dbReference>
<dbReference type="CDD" id="cd00554">
    <property type="entry name" value="MECDP_synthase"/>
    <property type="match status" value="1"/>
</dbReference>
<dbReference type="FunFam" id="3.30.1330.50:FF:000001">
    <property type="entry name" value="2-C-methyl-D-erythritol 2,4-cyclodiphosphate synthase"/>
    <property type="match status" value="1"/>
</dbReference>
<dbReference type="Gene3D" id="3.30.1330.50">
    <property type="entry name" value="2-C-methyl-D-erythritol 2,4-cyclodiphosphate synthase"/>
    <property type="match status" value="1"/>
</dbReference>
<dbReference type="HAMAP" id="MF_00107">
    <property type="entry name" value="IspF"/>
    <property type="match status" value="1"/>
</dbReference>
<dbReference type="InterPro" id="IPR003526">
    <property type="entry name" value="MECDP_synthase"/>
</dbReference>
<dbReference type="InterPro" id="IPR020555">
    <property type="entry name" value="MECDP_synthase_CS"/>
</dbReference>
<dbReference type="InterPro" id="IPR036571">
    <property type="entry name" value="MECDP_synthase_sf"/>
</dbReference>
<dbReference type="NCBIfam" id="TIGR00151">
    <property type="entry name" value="ispF"/>
    <property type="match status" value="1"/>
</dbReference>
<dbReference type="PANTHER" id="PTHR43181">
    <property type="entry name" value="2-C-METHYL-D-ERYTHRITOL 2,4-CYCLODIPHOSPHATE SYNTHASE, CHLOROPLASTIC"/>
    <property type="match status" value="1"/>
</dbReference>
<dbReference type="PANTHER" id="PTHR43181:SF1">
    <property type="entry name" value="2-C-METHYL-D-ERYTHRITOL 2,4-CYCLODIPHOSPHATE SYNTHASE, CHLOROPLASTIC"/>
    <property type="match status" value="1"/>
</dbReference>
<dbReference type="Pfam" id="PF02542">
    <property type="entry name" value="YgbB"/>
    <property type="match status" value="1"/>
</dbReference>
<dbReference type="SUPFAM" id="SSF69765">
    <property type="entry name" value="IpsF-like"/>
    <property type="match status" value="1"/>
</dbReference>
<dbReference type="PROSITE" id="PS01350">
    <property type="entry name" value="ISPF"/>
    <property type="match status" value="1"/>
</dbReference>